<gene>
    <name evidence="1" type="primary">miaA</name>
    <name type="ordered locus">Amuc_0642</name>
</gene>
<protein>
    <recommendedName>
        <fullName evidence="1">tRNA dimethylallyltransferase</fullName>
        <ecNumber evidence="1">2.5.1.75</ecNumber>
    </recommendedName>
    <alternativeName>
        <fullName evidence="1">Dimethylallyl diphosphate:tRNA dimethylallyltransferase</fullName>
        <shortName evidence="1">DMAPP:tRNA dimethylallyltransferase</shortName>
        <shortName evidence="1">DMATase</shortName>
    </alternativeName>
    <alternativeName>
        <fullName evidence="1">Isopentenyl-diphosphate:tRNA isopentenyltransferase</fullName>
        <shortName evidence="1">IPP transferase</shortName>
        <shortName evidence="1">IPPT</shortName>
        <shortName evidence="1">IPTase</shortName>
    </alternativeName>
</protein>
<proteinExistence type="inferred from homology"/>
<keyword id="KW-0067">ATP-binding</keyword>
<keyword id="KW-0460">Magnesium</keyword>
<keyword id="KW-0547">Nucleotide-binding</keyword>
<keyword id="KW-1185">Reference proteome</keyword>
<keyword id="KW-0808">Transferase</keyword>
<keyword id="KW-0819">tRNA processing</keyword>
<comment type="function">
    <text evidence="1">Catalyzes the transfer of a dimethylallyl group onto the adenine at position 37 in tRNAs that read codons beginning with uridine, leading to the formation of N6-(dimethylallyl)adenosine (i(6)A).</text>
</comment>
<comment type="catalytic activity">
    <reaction evidence="1">
        <text>adenosine(37) in tRNA + dimethylallyl diphosphate = N(6)-dimethylallyladenosine(37) in tRNA + diphosphate</text>
        <dbReference type="Rhea" id="RHEA:26482"/>
        <dbReference type="Rhea" id="RHEA-COMP:10162"/>
        <dbReference type="Rhea" id="RHEA-COMP:10375"/>
        <dbReference type="ChEBI" id="CHEBI:33019"/>
        <dbReference type="ChEBI" id="CHEBI:57623"/>
        <dbReference type="ChEBI" id="CHEBI:74411"/>
        <dbReference type="ChEBI" id="CHEBI:74415"/>
        <dbReference type="EC" id="2.5.1.75"/>
    </reaction>
</comment>
<comment type="cofactor">
    <cofactor evidence="1">
        <name>Mg(2+)</name>
        <dbReference type="ChEBI" id="CHEBI:18420"/>
    </cofactor>
</comment>
<comment type="subunit">
    <text evidence="1">Monomer.</text>
</comment>
<comment type="similarity">
    <text evidence="1">Belongs to the IPP transferase family.</text>
</comment>
<dbReference type="EC" id="2.5.1.75" evidence="1"/>
<dbReference type="EMBL" id="CP001071">
    <property type="protein sequence ID" value="ACD04479.1"/>
    <property type="molecule type" value="Genomic_DNA"/>
</dbReference>
<dbReference type="RefSeq" id="WP_012419694.1">
    <property type="nucleotide sequence ID" value="NC_010655.1"/>
</dbReference>
<dbReference type="SMR" id="B2UPK2"/>
<dbReference type="STRING" id="349741.Amuc_0642"/>
<dbReference type="PaxDb" id="349741-Amuc_0642"/>
<dbReference type="KEGG" id="amu:Amuc_0642"/>
<dbReference type="eggNOG" id="COG0324">
    <property type="taxonomic scope" value="Bacteria"/>
</dbReference>
<dbReference type="HOGENOM" id="CLU_032616_0_1_0"/>
<dbReference type="OrthoDB" id="9776390at2"/>
<dbReference type="Proteomes" id="UP000001031">
    <property type="component" value="Chromosome"/>
</dbReference>
<dbReference type="GO" id="GO:0005524">
    <property type="term" value="F:ATP binding"/>
    <property type="evidence" value="ECO:0007669"/>
    <property type="project" value="UniProtKB-UniRule"/>
</dbReference>
<dbReference type="GO" id="GO:0052381">
    <property type="term" value="F:tRNA dimethylallyltransferase activity"/>
    <property type="evidence" value="ECO:0007669"/>
    <property type="project" value="UniProtKB-UniRule"/>
</dbReference>
<dbReference type="GO" id="GO:0006400">
    <property type="term" value="P:tRNA modification"/>
    <property type="evidence" value="ECO:0007669"/>
    <property type="project" value="TreeGrafter"/>
</dbReference>
<dbReference type="Gene3D" id="1.10.20.140">
    <property type="match status" value="1"/>
</dbReference>
<dbReference type="Gene3D" id="1.10.287.890">
    <property type="entry name" value="Crystal structure of tRNA isopentenylpyrophosphate transferase (bh2366) domain"/>
    <property type="match status" value="1"/>
</dbReference>
<dbReference type="Gene3D" id="3.40.50.300">
    <property type="entry name" value="P-loop containing nucleotide triphosphate hydrolases"/>
    <property type="match status" value="1"/>
</dbReference>
<dbReference type="HAMAP" id="MF_00185">
    <property type="entry name" value="IPP_trans"/>
    <property type="match status" value="1"/>
</dbReference>
<dbReference type="InterPro" id="IPR039657">
    <property type="entry name" value="Dimethylallyltransferase"/>
</dbReference>
<dbReference type="InterPro" id="IPR018022">
    <property type="entry name" value="IPT"/>
</dbReference>
<dbReference type="InterPro" id="IPR027417">
    <property type="entry name" value="P-loop_NTPase"/>
</dbReference>
<dbReference type="NCBIfam" id="TIGR00174">
    <property type="entry name" value="miaA"/>
    <property type="match status" value="1"/>
</dbReference>
<dbReference type="PANTHER" id="PTHR11088">
    <property type="entry name" value="TRNA DIMETHYLALLYLTRANSFERASE"/>
    <property type="match status" value="1"/>
</dbReference>
<dbReference type="PANTHER" id="PTHR11088:SF60">
    <property type="entry name" value="TRNA DIMETHYLALLYLTRANSFERASE"/>
    <property type="match status" value="1"/>
</dbReference>
<dbReference type="Pfam" id="PF01715">
    <property type="entry name" value="IPPT"/>
    <property type="match status" value="1"/>
</dbReference>
<dbReference type="SUPFAM" id="SSF52540">
    <property type="entry name" value="P-loop containing nucleoside triphosphate hydrolases"/>
    <property type="match status" value="1"/>
</dbReference>
<organism>
    <name type="scientific">Akkermansia muciniphila (strain ATCC BAA-835 / DSM 22959 / JCM 33894 / BCRC 81048 / CCUG 64013 / CIP 107961 / Muc)</name>
    <dbReference type="NCBI Taxonomy" id="349741"/>
    <lineage>
        <taxon>Bacteria</taxon>
        <taxon>Pseudomonadati</taxon>
        <taxon>Verrucomicrobiota</taxon>
        <taxon>Verrucomicrobiia</taxon>
        <taxon>Verrucomicrobiales</taxon>
        <taxon>Akkermansiaceae</taxon>
        <taxon>Akkermansia</taxon>
    </lineage>
</organism>
<evidence type="ECO:0000255" key="1">
    <source>
        <dbReference type="HAMAP-Rule" id="MF_00185"/>
    </source>
</evidence>
<sequence>MTLFLAGPTGSGKSAVAVELAEMLDAEIVSSDAYQVYRELPILTAAPSPADRERVPHHMVSIIPVQKNWNATEHYHRAMRCMEEIHARGKIAIVTGGSGLYFKFLSHGLSEAPPGDAALRAAFANCSTEALYARLSSLDPEGAASTDASNRRYVERNLEIVLAGGKPLSFWKRNWLTPPRGPGWVISRDVPELDERIAHRAARMMQEGAVEETASLGPCSATAERTLGLALIRSMLRGEISRENCQGQLALATRQYAKRQRTWLKREQWLRKLPASPSDSPRALAERIMEELGH</sequence>
<accession>B2UPK2</accession>
<feature type="chain" id="PRO_0000377056" description="tRNA dimethylallyltransferase">
    <location>
        <begin position="1"/>
        <end position="294"/>
    </location>
</feature>
<feature type="binding site" evidence="1">
    <location>
        <begin position="7"/>
        <end position="14"/>
    </location>
    <ligand>
        <name>ATP</name>
        <dbReference type="ChEBI" id="CHEBI:30616"/>
    </ligand>
</feature>
<feature type="binding site" evidence="1">
    <location>
        <begin position="9"/>
        <end position="14"/>
    </location>
    <ligand>
        <name>substrate</name>
    </ligand>
</feature>
<feature type="site" description="Interaction with substrate tRNA" evidence="1">
    <location>
        <position position="98"/>
    </location>
</feature>
<reference key="1">
    <citation type="journal article" date="2011" name="PLoS ONE">
        <title>The genome of Akkermansia muciniphila, a dedicated intestinal mucin degrader, and its use in exploring intestinal metagenomes.</title>
        <authorList>
            <person name="van Passel M.W."/>
            <person name="Kant R."/>
            <person name="Zoetendal E.G."/>
            <person name="Plugge C.M."/>
            <person name="Derrien M."/>
            <person name="Malfatti S.A."/>
            <person name="Chain P.S."/>
            <person name="Woyke T."/>
            <person name="Palva A."/>
            <person name="de Vos W.M."/>
            <person name="Smidt H."/>
        </authorList>
    </citation>
    <scope>NUCLEOTIDE SEQUENCE [LARGE SCALE GENOMIC DNA]</scope>
    <source>
        <strain>ATCC BAA-835 / DSM 22959 / JCM 33894 / BCRC 81048 / CCUG 64013 / CIP 107961 / Muc</strain>
    </source>
</reference>
<name>MIAA_AKKM8</name>